<gene>
    <name type="primary">Bex1</name>
</gene>
<comment type="function">
    <text evidence="1 5">Signaling adapter molecule involved in p75NTR/NGFR signaling (PubMed:16498402). Plays a role in cell cycle progression and neuronal differentiation (PubMed:16498402). Inhibits neuronal differentiation in response to nerve growth factor (NGF) (PubMed:16498402). May act as a link between the cell cycle and neurotrophic factor signaling, possibly by functioning as an upstream modulator of receptor signaling, coordinating biological responses to external signals with internal cellular states (PubMed:16498402). In absence of reductive stress, acts as a pseudosubstrate for the CRL2(FEM1B) complex: associates with FEM1B via zinc, thereby preventing association between FEM1B and its substrates (By similarity).</text>
</comment>
<comment type="subunit">
    <text evidence="1 5">Interacts with neurotrophin receptor p75NTR/NGFR (PubMed:16498402). Interacts with OMP (By similarity).</text>
</comment>
<comment type="interaction">
    <interactant intactId="EBI-8089575">
        <id>Q3MKQ2</id>
    </interactant>
    <interactant intactId="EBI-1038810">
        <id>P07174</id>
        <label>Ngfr</label>
    </interactant>
    <organismsDiffer>false</organismsDiffer>
    <experiments>4</experiments>
</comment>
<comment type="subcellular location">
    <subcellularLocation>
        <location evidence="4 5">Nucleus</location>
    </subcellularLocation>
    <subcellularLocation>
        <location evidence="5">Cytoplasm</location>
    </subcellularLocation>
    <text evidence="5">Shuttles between the cytoplasm and the nucleus (PubMed:16498402). Predominantly nuclear (PubMed:16498402).</text>
</comment>
<comment type="tissue specificity">
    <text evidence="5">Expressed in the central nervous system. Expressed in Schwann cells from newborn sciatic nerve.</text>
</comment>
<comment type="developmental stage">
    <text evidence="5">Oscillates during the cell cycle, being lowest at G1 and highest at S phase (at protein level).</text>
</comment>
<comment type="domain">
    <text evidence="2">The histidine cluster (His cluster) and Cys-125 mediate zinc-binding.</text>
</comment>
<comment type="PTM">
    <text evidence="5">Phosphorylated. Phosphorylation of Ser-105 protects it from the proteasome.</text>
</comment>
<comment type="PTM">
    <text evidence="5">Ubiquitinated. Degraded by the proteasome.</text>
</comment>
<comment type="similarity">
    <text evidence="6">Belongs to the BEX family.</text>
</comment>
<accession>Q3MKQ2</accession>
<accession>Q6XUZ8</accession>
<proteinExistence type="evidence at protein level"/>
<dbReference type="EMBL" id="AY208292">
    <property type="protein sequence ID" value="AAP81280.1"/>
    <property type="molecule type" value="mRNA"/>
</dbReference>
<dbReference type="EMBL" id="AY833554">
    <property type="protein sequence ID" value="AAX40672.1"/>
    <property type="molecule type" value="mRNA"/>
</dbReference>
<dbReference type="RefSeq" id="NP_001032442.1">
    <property type="nucleotide sequence ID" value="NM_001037365.1"/>
</dbReference>
<dbReference type="BioGRID" id="272932">
    <property type="interactions" value="1"/>
</dbReference>
<dbReference type="FunCoup" id="Q3MKQ2">
    <property type="interactions" value="40"/>
</dbReference>
<dbReference type="IntAct" id="Q3MKQ2">
    <property type="interactions" value="1"/>
</dbReference>
<dbReference type="MINT" id="Q3MKQ2"/>
<dbReference type="STRING" id="10116.ENSRNOP00000039471"/>
<dbReference type="iPTMnet" id="Q3MKQ2"/>
<dbReference type="PhosphoSitePlus" id="Q3MKQ2"/>
<dbReference type="jPOST" id="Q3MKQ2"/>
<dbReference type="PaxDb" id="10116-ENSRNOP00000039471"/>
<dbReference type="GeneID" id="501625"/>
<dbReference type="KEGG" id="rno:501625"/>
<dbReference type="AGR" id="RGD:1564643"/>
<dbReference type="CTD" id="55859"/>
<dbReference type="RGD" id="1564643">
    <property type="gene designation" value="Bex1"/>
</dbReference>
<dbReference type="eggNOG" id="ENOG502RW3Y">
    <property type="taxonomic scope" value="Eukaryota"/>
</dbReference>
<dbReference type="InParanoid" id="Q3MKQ2"/>
<dbReference type="OrthoDB" id="9833968at2759"/>
<dbReference type="PhylomeDB" id="Q3MKQ2"/>
<dbReference type="TreeFam" id="TF337909"/>
<dbReference type="PRO" id="PR:Q3MKQ2"/>
<dbReference type="Proteomes" id="UP000002494">
    <property type="component" value="Unplaced"/>
</dbReference>
<dbReference type="GO" id="GO:0005737">
    <property type="term" value="C:cytoplasm"/>
    <property type="evidence" value="ECO:0000314"/>
    <property type="project" value="MGI"/>
</dbReference>
<dbReference type="GO" id="GO:0005634">
    <property type="term" value="C:nucleus"/>
    <property type="evidence" value="ECO:0000314"/>
    <property type="project" value="MGI"/>
</dbReference>
<dbReference type="GO" id="GO:0046872">
    <property type="term" value="F:metal ion binding"/>
    <property type="evidence" value="ECO:0007669"/>
    <property type="project" value="UniProtKB-KW"/>
</dbReference>
<dbReference type="GO" id="GO:0140678">
    <property type="term" value="F:molecular function inhibitor activity"/>
    <property type="evidence" value="ECO:0000250"/>
    <property type="project" value="UniProtKB"/>
</dbReference>
<dbReference type="GO" id="GO:0005102">
    <property type="term" value="F:signaling receptor binding"/>
    <property type="evidence" value="ECO:0000318"/>
    <property type="project" value="GO_Central"/>
</dbReference>
<dbReference type="GO" id="GO:0061564">
    <property type="term" value="P:axon development"/>
    <property type="evidence" value="ECO:0000266"/>
    <property type="project" value="RGD"/>
</dbReference>
<dbReference type="GO" id="GO:0031103">
    <property type="term" value="P:axon regeneration"/>
    <property type="evidence" value="ECO:0000266"/>
    <property type="project" value="RGD"/>
</dbReference>
<dbReference type="GO" id="GO:0045665">
    <property type="term" value="P:negative regulation of neuron differentiation"/>
    <property type="evidence" value="ECO:0000314"/>
    <property type="project" value="MGI"/>
</dbReference>
<dbReference type="GO" id="GO:0031397">
    <property type="term" value="P:negative regulation of protein ubiquitination"/>
    <property type="evidence" value="ECO:0000250"/>
    <property type="project" value="UniProtKB"/>
</dbReference>
<dbReference type="GO" id="GO:0002052">
    <property type="term" value="P:positive regulation of neuroblast proliferation"/>
    <property type="evidence" value="ECO:0000314"/>
    <property type="project" value="MGI"/>
</dbReference>
<dbReference type="GO" id="GO:0042981">
    <property type="term" value="P:regulation of apoptotic process"/>
    <property type="evidence" value="ECO:0000266"/>
    <property type="project" value="RGD"/>
</dbReference>
<dbReference type="GO" id="GO:0051726">
    <property type="term" value="P:regulation of cell cycle"/>
    <property type="evidence" value="ECO:0000266"/>
    <property type="project" value="RGD"/>
</dbReference>
<dbReference type="GO" id="GO:0007165">
    <property type="term" value="P:signal transduction"/>
    <property type="evidence" value="ECO:0000318"/>
    <property type="project" value="GO_Central"/>
</dbReference>
<dbReference type="InterPro" id="IPR007623">
    <property type="entry name" value="BEX"/>
</dbReference>
<dbReference type="InterPro" id="IPR021156">
    <property type="entry name" value="TF_A-like/BEX"/>
</dbReference>
<dbReference type="PANTHER" id="PTHR19430:SF4">
    <property type="entry name" value="PROTEIN BEX1"/>
    <property type="match status" value="1"/>
</dbReference>
<dbReference type="PANTHER" id="PTHR19430">
    <property type="entry name" value="PROTEIN BEX1-RELATED"/>
    <property type="match status" value="1"/>
</dbReference>
<dbReference type="Pfam" id="PF04538">
    <property type="entry name" value="BEX"/>
    <property type="match status" value="1"/>
</dbReference>
<dbReference type="PIRSF" id="PIRSF008633">
    <property type="entry name" value="BEX"/>
    <property type="match status" value="1"/>
</dbReference>
<reference key="1">
    <citation type="journal article" date="2004" name="Gene">
        <title>Differential gene expressions in the visual cortex of postnatal day 1 versus day 21 rats revealed by suppression subtractive hybridization.</title>
        <authorList>
            <person name="Feng Y."/>
            <person name="Liang H.L."/>
            <person name="Wong-Riley M."/>
        </authorList>
    </citation>
    <scope>NUCLEOTIDE SEQUENCE [MRNA]</scope>
    <source>
        <strain>CD Charles River</strain>
    </source>
</reference>
<reference key="2">
    <citation type="journal article" date="2005" name="Gene">
        <title>Characterization of the Bex gene family in humans, mice, and rats.</title>
        <authorList>
            <person name="Alvarez E."/>
            <person name="Zhou W."/>
            <person name="Witta S.E."/>
            <person name="Freed C.R."/>
        </authorList>
    </citation>
    <scope>NUCLEOTIDE SEQUENCE [MRNA]</scope>
    <scope>SUBCELLULAR LOCATION</scope>
    <scope>MUTAGENESIS OF LYS-19 AND LYS-45</scope>
    <source>
        <strain>Sprague-Dawley</strain>
    </source>
</reference>
<reference key="3">
    <citation type="journal article" date="2006" name="EMBO J.">
        <title>Bex1, a novel interactor of the p75 neurotrophin receptor, links neurotrophin signaling to the cell cycle.</title>
        <authorList>
            <person name="Vilar M."/>
            <person name="Murillo-Carretero M."/>
            <person name="Mira H."/>
            <person name="Magnusson K."/>
            <person name="Besset V."/>
            <person name="Ibanez C.F."/>
        </authorList>
    </citation>
    <scope>FUNCTION</scope>
    <scope>SUBCELLULAR LOCATION</scope>
    <scope>TISSUE SPECIFICITY</scope>
    <scope>DEVELOPMENTAL STAGE</scope>
    <scope>PHOSPHORYLATION AT SER-105</scope>
    <scope>UBIQUITINATION</scope>
    <scope>INTERACTION WITH NGFR</scope>
    <scope>MUTAGENESIS OF 53-ARG--ARG-55 AND SER-105</scope>
</reference>
<feature type="chain" id="PRO_0000229775" description="Protein BEX1">
    <location>
        <begin position="1"/>
        <end position="128"/>
    </location>
</feature>
<feature type="region of interest" description="Disordered" evidence="3">
    <location>
        <begin position="1"/>
        <end position="55"/>
    </location>
</feature>
<feature type="region of interest" description="Disordered" evidence="3">
    <location>
        <begin position="107"/>
        <end position="128"/>
    </location>
</feature>
<feature type="region of interest" description="His cluster" evidence="2">
    <location>
        <begin position="117"/>
        <end position="121"/>
    </location>
</feature>
<feature type="compositionally biased region" description="Basic and acidic residues" evidence="3">
    <location>
        <begin position="14"/>
        <end position="35"/>
    </location>
</feature>
<feature type="compositionally biased region" description="Basic and acidic residues" evidence="3">
    <location>
        <begin position="115"/>
        <end position="128"/>
    </location>
</feature>
<feature type="binding site" evidence="2">
    <location>
        <position position="125"/>
    </location>
    <ligand>
        <name>Zn(2+)</name>
        <dbReference type="ChEBI" id="CHEBI:29105"/>
        <note>ligand shared with FEM1B</note>
    </ligand>
</feature>
<feature type="modified residue" description="Phosphoserine; by PKB/AKT1" evidence="5">
    <location>
        <position position="105"/>
    </location>
</feature>
<feature type="mutagenesis site" description="Does not affect subcellular location." evidence="4">
    <original>K</original>
    <variation>E</variation>
    <location>
        <position position="19"/>
    </location>
</feature>
<feature type="mutagenesis site" description="Does not affect subcellular location." evidence="4">
    <original>K</original>
    <variation>E</variation>
    <location>
        <position position="45"/>
    </location>
</feature>
<feature type="mutagenesis site" description="Abolishes nuclear localization." evidence="5">
    <original>RRR</original>
    <variation>AAA</variation>
    <location>
        <begin position="53"/>
        <end position="55"/>
    </location>
</feature>
<feature type="mutagenesis site" description="Abolishes phosphorylation, leading to degradation by the proteasome." evidence="5">
    <original>S</original>
    <variation>A</variation>
    <location>
        <position position="105"/>
    </location>
</feature>
<feature type="sequence conflict" description="In Ref. 2; AAX40672." evidence="6" ref="2">
    <original>A</original>
    <variation>S</variation>
    <location>
        <position position="63"/>
    </location>
</feature>
<feature type="sequence conflict" description="In Ref. 2; AAX40672." evidence="6" ref="2">
    <original>P</original>
    <variation>A</variation>
    <location>
        <position position="76"/>
    </location>
</feature>
<feature type="sequence conflict" description="In Ref. 2; AAX40672." evidence="6" ref="2">
    <original>E</original>
    <variation>D</variation>
    <location>
        <position position="82"/>
    </location>
</feature>
<feature type="sequence conflict" description="In Ref. 2; AAX40672." evidence="6" ref="2">
    <original>Q</original>
    <variation>H</variation>
    <location>
        <position position="94"/>
    </location>
</feature>
<feature type="sequence conflict" description="In Ref. 2; AAX40672." evidence="6" ref="2">
    <original>E</original>
    <variation>G</variation>
    <location>
        <position position="97"/>
    </location>
</feature>
<feature type="sequence conflict" description="In Ref. 2; AAX40672." evidence="6" ref="2">
    <original>H</original>
    <variation>N</variation>
    <location>
        <position position="121"/>
    </location>
</feature>
<keyword id="KW-0963">Cytoplasm</keyword>
<keyword id="KW-0217">Developmental protein</keyword>
<keyword id="KW-0221">Differentiation</keyword>
<keyword id="KW-0479">Metal-binding</keyword>
<keyword id="KW-0524">Neurogenesis</keyword>
<keyword id="KW-0539">Nucleus</keyword>
<keyword id="KW-0597">Phosphoprotein</keyword>
<keyword id="KW-1185">Reference proteome</keyword>
<keyword id="KW-0832">Ubl conjugation</keyword>
<keyword id="KW-0862">Zinc</keyword>
<protein>
    <recommendedName>
        <fullName>Protein BEX1</fullName>
    </recommendedName>
    <alternativeName>
        <fullName>Brain-expressed X-linked protein 1 homolog</fullName>
    </alternativeName>
    <alternativeName>
        <fullName>EG2RVC</fullName>
    </alternativeName>
</protein>
<organism>
    <name type="scientific">Rattus norvegicus</name>
    <name type="common">Rat</name>
    <dbReference type="NCBI Taxonomy" id="10116"/>
    <lineage>
        <taxon>Eukaryota</taxon>
        <taxon>Metazoa</taxon>
        <taxon>Chordata</taxon>
        <taxon>Craniata</taxon>
        <taxon>Vertebrata</taxon>
        <taxon>Euteleostomi</taxon>
        <taxon>Mammalia</taxon>
        <taxon>Eutheria</taxon>
        <taxon>Euarchontoglires</taxon>
        <taxon>Glires</taxon>
        <taxon>Rodentia</taxon>
        <taxon>Myomorpha</taxon>
        <taxon>Muroidea</taxon>
        <taxon>Muridae</taxon>
        <taxon>Murinae</taxon>
        <taxon>Rattus</taxon>
    </lineage>
</organism>
<name>BEX1_RAT</name>
<evidence type="ECO:0000250" key="1">
    <source>
        <dbReference type="UniProtKB" id="Q9R224"/>
    </source>
</evidence>
<evidence type="ECO:0000250" key="2">
    <source>
        <dbReference type="UniProtKB" id="Q9WTZ9"/>
    </source>
</evidence>
<evidence type="ECO:0000256" key="3">
    <source>
        <dbReference type="SAM" id="MobiDB-lite"/>
    </source>
</evidence>
<evidence type="ECO:0000269" key="4">
    <source>
    </source>
</evidence>
<evidence type="ECO:0000269" key="5">
    <source>
    </source>
</evidence>
<evidence type="ECO:0000305" key="6"/>
<sequence length="128" mass="15248">MESKDQGAKNLNMENDHQKKEEKEEKPQDTIKREPVVAPTFEAGKNCAPRGGRRRFRVRQPIAHYRWDLMHRVGEPQGRMREENVQRFGEDMRQLMEKLRERQLSHSLRAVSTDPPHHDHHDEFCLMP</sequence>